<name>NFIL3_XENLA</name>
<evidence type="ECO:0000250" key="1"/>
<evidence type="ECO:0000250" key="2">
    <source>
        <dbReference type="UniProtKB" id="O08750"/>
    </source>
</evidence>
<evidence type="ECO:0000250" key="3">
    <source>
        <dbReference type="UniProtKB" id="Q16649"/>
    </source>
</evidence>
<evidence type="ECO:0000255" key="4">
    <source>
        <dbReference type="PROSITE-ProRule" id="PRU00978"/>
    </source>
</evidence>
<evidence type="ECO:0000256" key="5">
    <source>
        <dbReference type="SAM" id="MobiDB-lite"/>
    </source>
</evidence>
<evidence type="ECO:0000305" key="6"/>
<organism>
    <name type="scientific">Xenopus laevis</name>
    <name type="common">African clawed frog</name>
    <dbReference type="NCBI Taxonomy" id="8355"/>
    <lineage>
        <taxon>Eukaryota</taxon>
        <taxon>Metazoa</taxon>
        <taxon>Chordata</taxon>
        <taxon>Craniata</taxon>
        <taxon>Vertebrata</taxon>
        <taxon>Euteleostomi</taxon>
        <taxon>Amphibia</taxon>
        <taxon>Batrachia</taxon>
        <taxon>Anura</taxon>
        <taxon>Pipoidea</taxon>
        <taxon>Pipidae</taxon>
        <taxon>Xenopodinae</taxon>
        <taxon>Xenopus</taxon>
        <taxon>Xenopus</taxon>
    </lineage>
</organism>
<dbReference type="EMBL" id="BC081074">
    <property type="protein sequence ID" value="AAH81074.1"/>
    <property type="molecule type" value="mRNA"/>
</dbReference>
<dbReference type="RefSeq" id="NP_001087679.1">
    <property type="nucleotide sequence ID" value="NM_001094210.1"/>
</dbReference>
<dbReference type="SMR" id="Q66J36"/>
<dbReference type="GeneID" id="447503"/>
<dbReference type="KEGG" id="xla:447503"/>
<dbReference type="CTD" id="447503"/>
<dbReference type="OrthoDB" id="6151507at2759"/>
<dbReference type="Proteomes" id="UP000186698">
    <property type="component" value="Chromosome 4L"/>
</dbReference>
<dbReference type="Bgee" id="447503">
    <property type="expression patterns" value="Expressed in internal ear and 1 other cell type or tissue"/>
</dbReference>
<dbReference type="GO" id="GO:0005737">
    <property type="term" value="C:cytoplasm"/>
    <property type="evidence" value="ECO:0007669"/>
    <property type="project" value="UniProtKB-SubCell"/>
</dbReference>
<dbReference type="GO" id="GO:0005634">
    <property type="term" value="C:nucleus"/>
    <property type="evidence" value="ECO:0000318"/>
    <property type="project" value="GO_Central"/>
</dbReference>
<dbReference type="GO" id="GO:0003677">
    <property type="term" value="F:DNA binding"/>
    <property type="evidence" value="ECO:0007669"/>
    <property type="project" value="UniProtKB-KW"/>
</dbReference>
<dbReference type="GO" id="GO:0003700">
    <property type="term" value="F:DNA-binding transcription factor activity"/>
    <property type="evidence" value="ECO:0007669"/>
    <property type="project" value="InterPro"/>
</dbReference>
<dbReference type="GO" id="GO:0007623">
    <property type="term" value="P:circadian rhythm"/>
    <property type="evidence" value="ECO:0000318"/>
    <property type="project" value="GO_Central"/>
</dbReference>
<dbReference type="GO" id="GO:0006955">
    <property type="term" value="P:immune response"/>
    <property type="evidence" value="ECO:0007669"/>
    <property type="project" value="InterPro"/>
</dbReference>
<dbReference type="GO" id="GO:0045892">
    <property type="term" value="P:negative regulation of DNA-templated transcription"/>
    <property type="evidence" value="ECO:0000250"/>
    <property type="project" value="UniProtKB"/>
</dbReference>
<dbReference type="GO" id="GO:0006355">
    <property type="term" value="P:regulation of DNA-templated transcription"/>
    <property type="evidence" value="ECO:0000318"/>
    <property type="project" value="GO_Central"/>
</dbReference>
<dbReference type="GO" id="GO:0006366">
    <property type="term" value="P:transcription by RNA polymerase II"/>
    <property type="evidence" value="ECO:0007669"/>
    <property type="project" value="InterPro"/>
</dbReference>
<dbReference type="CDD" id="cd14694">
    <property type="entry name" value="bZIP_NFIL3"/>
    <property type="match status" value="1"/>
</dbReference>
<dbReference type="FunFam" id="1.20.5.170:FF:000025">
    <property type="entry name" value="nuclear factor interleukin-3-regulated protein-like"/>
    <property type="match status" value="1"/>
</dbReference>
<dbReference type="Gene3D" id="1.20.5.170">
    <property type="match status" value="1"/>
</dbReference>
<dbReference type="InterPro" id="IPR004827">
    <property type="entry name" value="bZIP"/>
</dbReference>
<dbReference type="InterPro" id="IPR046347">
    <property type="entry name" value="bZIP_sf"/>
</dbReference>
<dbReference type="InterPro" id="IPR047229">
    <property type="entry name" value="NFIL3-like"/>
</dbReference>
<dbReference type="InterPro" id="IPR047106">
    <property type="entry name" value="NFIL3-like_bZIP"/>
</dbReference>
<dbReference type="InterPro" id="IPR016743">
    <property type="entry name" value="NFIL3/E4BP4"/>
</dbReference>
<dbReference type="InterPro" id="IPR010533">
    <property type="entry name" value="Vert_IL3-reg_TF"/>
</dbReference>
<dbReference type="PANTHER" id="PTHR15284">
    <property type="entry name" value="NUCLEAR FACTOR INTERLEUKIN-3-REGULATED PROTEIN"/>
    <property type="match status" value="1"/>
</dbReference>
<dbReference type="PANTHER" id="PTHR15284:SF1">
    <property type="entry name" value="NUCLEAR FACTOR INTERLEUKIN-3-REGULATED PROTEIN"/>
    <property type="match status" value="1"/>
</dbReference>
<dbReference type="Pfam" id="PF07716">
    <property type="entry name" value="bZIP_2"/>
    <property type="match status" value="1"/>
</dbReference>
<dbReference type="Pfam" id="PF06529">
    <property type="entry name" value="Vert_IL3-reg_TF"/>
    <property type="match status" value="1"/>
</dbReference>
<dbReference type="PIRSF" id="PIRSF019029">
    <property type="entry name" value="bZIP_E4BP4"/>
    <property type="match status" value="1"/>
</dbReference>
<dbReference type="SMART" id="SM00338">
    <property type="entry name" value="BRLZ"/>
    <property type="match status" value="1"/>
</dbReference>
<dbReference type="SUPFAM" id="SSF57959">
    <property type="entry name" value="Leucine zipper domain"/>
    <property type="match status" value="1"/>
</dbReference>
<dbReference type="PROSITE" id="PS50217">
    <property type="entry name" value="BZIP"/>
    <property type="match status" value="1"/>
</dbReference>
<dbReference type="PROSITE" id="PS00036">
    <property type="entry name" value="BZIP_BASIC"/>
    <property type="match status" value="1"/>
</dbReference>
<proteinExistence type="evidence at transcript level"/>
<feature type="chain" id="PRO_0000292672" description="Nuclear factor interleukin-3-regulated protein">
    <location>
        <begin position="1"/>
        <end position="456"/>
    </location>
</feature>
<feature type="domain" description="bZIP" evidence="4">
    <location>
        <begin position="66"/>
        <end position="129"/>
    </location>
</feature>
<feature type="region of interest" description="Disordered" evidence="5">
    <location>
        <begin position="30"/>
        <end position="49"/>
    </location>
</feature>
<feature type="region of interest" description="Basic motif" evidence="4">
    <location>
        <begin position="72"/>
        <end position="88"/>
    </location>
</feature>
<feature type="region of interest" description="Leucine-zipper" evidence="4">
    <location>
        <begin position="94"/>
        <end position="115"/>
    </location>
</feature>
<feature type="region of interest" description="Disordered" evidence="5">
    <location>
        <begin position="257"/>
        <end position="297"/>
    </location>
</feature>
<feature type="compositionally biased region" description="Polar residues" evidence="5">
    <location>
        <begin position="259"/>
        <end position="268"/>
    </location>
</feature>
<reference key="1">
    <citation type="submission" date="2004-08" db="EMBL/GenBank/DDBJ databases">
        <authorList>
            <consortium name="NIH - Xenopus Gene Collection (XGC) project"/>
        </authorList>
    </citation>
    <scope>NUCLEOTIDE SEQUENCE [LARGE SCALE MRNA]</scope>
    <source>
        <tissue>Kidney</tissue>
    </source>
</reference>
<protein>
    <recommendedName>
        <fullName>Nuclear factor interleukin-3-regulated protein</fullName>
    </recommendedName>
</protein>
<gene>
    <name type="primary">nfil3</name>
</gene>
<accession>Q66J36</accession>
<comment type="function">
    <text evidence="2">May act as a transcriptional regulator of a number of proteins of the circadian clock.</text>
</comment>
<comment type="subunit">
    <text evidence="3">Homodimer (By similarity). Binds DNA as a dimer (By similarity).</text>
</comment>
<comment type="subcellular location">
    <subcellularLocation>
        <location evidence="1">Cytoplasm</location>
    </subcellularLocation>
    <subcellularLocation>
        <location evidence="4">Nucleus</location>
    </subcellularLocation>
</comment>
<comment type="similarity">
    <text evidence="6">Belongs to the bZIP family. NFIL3 subfamily.</text>
</comment>
<sequence length="456" mass="50864">MPTIKKEQECADSRMENILVLSSNIPDMSESMDSSNDMLYSDGLPVKNKSSSCRRKREFIPDEKKDAMYWEKRRKNNEAAKRSREKRRLNDMVLENKLIALGEENASLKTELLSLKLKFGLISSTSYAQEIQKVTSSTAMYYQEYASSKSNMMSYNSDPEHSVMTSSCISVIKHSPQSSLSDVSEASSSVEHVQPSTIQSNCRSTDIKSQRIKQEQMEAGNFSRDAREESNTFQGSIYANYIGNTFSGYSHSPPLLHINRSSSNSPRTSEADEGVVGKTSDVEDEQQVPKGPIHSPIELKNGHATIIKVPEVNSSALPHKLRIKAKAMQIKVESLESELNSTQKLTLPIDMSSKQHLQLEKHNSESMVHSSLSPLSVQVTNIQDWPLKPGQWHHRELEKIPSVCKTSGIVAIKDNVYKASESESLYLKQGIATLSAEVASLKRLIVTQEICASNSS</sequence>
<keyword id="KW-0010">Activator</keyword>
<keyword id="KW-0090">Biological rhythms</keyword>
<keyword id="KW-0963">Cytoplasm</keyword>
<keyword id="KW-0238">DNA-binding</keyword>
<keyword id="KW-0539">Nucleus</keyword>
<keyword id="KW-1185">Reference proteome</keyword>
<keyword id="KW-0678">Repressor</keyword>
<keyword id="KW-0804">Transcription</keyword>
<keyword id="KW-0805">Transcription regulation</keyword>